<name>RPOZ_YERPN</name>
<evidence type="ECO:0000255" key="1">
    <source>
        <dbReference type="HAMAP-Rule" id="MF_00366"/>
    </source>
</evidence>
<feature type="chain" id="PRO_1000006040" description="DNA-directed RNA polymerase subunit omega">
    <location>
        <begin position="1"/>
        <end position="91"/>
    </location>
</feature>
<comment type="function">
    <text evidence="1">Promotes RNA polymerase assembly. Latches the N- and C-terminal regions of the beta' subunit thereby facilitating its interaction with the beta and alpha subunits.</text>
</comment>
<comment type="catalytic activity">
    <reaction evidence="1">
        <text>RNA(n) + a ribonucleoside 5'-triphosphate = RNA(n+1) + diphosphate</text>
        <dbReference type="Rhea" id="RHEA:21248"/>
        <dbReference type="Rhea" id="RHEA-COMP:14527"/>
        <dbReference type="Rhea" id="RHEA-COMP:17342"/>
        <dbReference type="ChEBI" id="CHEBI:33019"/>
        <dbReference type="ChEBI" id="CHEBI:61557"/>
        <dbReference type="ChEBI" id="CHEBI:140395"/>
        <dbReference type="EC" id="2.7.7.6"/>
    </reaction>
</comment>
<comment type="subunit">
    <text evidence="1">The RNAP catalytic core consists of 2 alpha, 1 beta, 1 beta' and 1 omega subunit. When a sigma factor is associated with the core the holoenzyme is formed, which can initiate transcription.</text>
</comment>
<comment type="similarity">
    <text evidence="1">Belongs to the RNA polymerase subunit omega family.</text>
</comment>
<protein>
    <recommendedName>
        <fullName evidence="1">DNA-directed RNA polymerase subunit omega</fullName>
        <shortName evidence="1">RNAP omega subunit</shortName>
        <ecNumber evidence="1">2.7.7.6</ecNumber>
    </recommendedName>
    <alternativeName>
        <fullName evidence="1">RNA polymerase omega subunit</fullName>
    </alternativeName>
    <alternativeName>
        <fullName evidence="1">Transcriptase subunit omega</fullName>
    </alternativeName>
</protein>
<gene>
    <name evidence="1" type="primary">rpoZ</name>
    <name type="ordered locus">YPN_3811</name>
    <name type="ORF">YP516_4331</name>
</gene>
<dbReference type="EC" id="2.7.7.6" evidence="1"/>
<dbReference type="EMBL" id="CP000305">
    <property type="protein sequence ID" value="ABG20138.1"/>
    <property type="molecule type" value="Genomic_DNA"/>
</dbReference>
<dbReference type="EMBL" id="ACNQ01000019">
    <property type="protein sequence ID" value="EEO74724.1"/>
    <property type="molecule type" value="Genomic_DNA"/>
</dbReference>
<dbReference type="RefSeq" id="WP_002209001.1">
    <property type="nucleotide sequence ID" value="NZ_ACNQ01000019.1"/>
</dbReference>
<dbReference type="SMR" id="Q1CCZ2"/>
<dbReference type="GeneID" id="57974551"/>
<dbReference type="KEGG" id="ypn:YPN_3811"/>
<dbReference type="HOGENOM" id="CLU_125406_5_3_6"/>
<dbReference type="Proteomes" id="UP000008936">
    <property type="component" value="Chromosome"/>
</dbReference>
<dbReference type="GO" id="GO:0000428">
    <property type="term" value="C:DNA-directed RNA polymerase complex"/>
    <property type="evidence" value="ECO:0007669"/>
    <property type="project" value="UniProtKB-KW"/>
</dbReference>
<dbReference type="GO" id="GO:0003677">
    <property type="term" value="F:DNA binding"/>
    <property type="evidence" value="ECO:0007669"/>
    <property type="project" value="UniProtKB-UniRule"/>
</dbReference>
<dbReference type="GO" id="GO:0003899">
    <property type="term" value="F:DNA-directed RNA polymerase activity"/>
    <property type="evidence" value="ECO:0007669"/>
    <property type="project" value="UniProtKB-UniRule"/>
</dbReference>
<dbReference type="GO" id="GO:0006351">
    <property type="term" value="P:DNA-templated transcription"/>
    <property type="evidence" value="ECO:0007669"/>
    <property type="project" value="UniProtKB-UniRule"/>
</dbReference>
<dbReference type="FunFam" id="3.90.940.10:FF:000001">
    <property type="entry name" value="DNA-directed RNA polymerase subunit omega"/>
    <property type="match status" value="1"/>
</dbReference>
<dbReference type="Gene3D" id="3.90.940.10">
    <property type="match status" value="1"/>
</dbReference>
<dbReference type="HAMAP" id="MF_00366">
    <property type="entry name" value="RNApol_bact_RpoZ"/>
    <property type="match status" value="1"/>
</dbReference>
<dbReference type="InterPro" id="IPR003716">
    <property type="entry name" value="DNA-dir_RNA_pol_omega"/>
</dbReference>
<dbReference type="InterPro" id="IPR006110">
    <property type="entry name" value="Pol_omega/Rpo6/RPB6"/>
</dbReference>
<dbReference type="InterPro" id="IPR036161">
    <property type="entry name" value="RPB6/omega-like_sf"/>
</dbReference>
<dbReference type="NCBIfam" id="TIGR00690">
    <property type="entry name" value="rpoZ"/>
    <property type="match status" value="1"/>
</dbReference>
<dbReference type="PANTHER" id="PTHR34476">
    <property type="entry name" value="DNA-DIRECTED RNA POLYMERASE SUBUNIT OMEGA"/>
    <property type="match status" value="1"/>
</dbReference>
<dbReference type="PANTHER" id="PTHR34476:SF1">
    <property type="entry name" value="DNA-DIRECTED RNA POLYMERASE SUBUNIT OMEGA"/>
    <property type="match status" value="1"/>
</dbReference>
<dbReference type="Pfam" id="PF01192">
    <property type="entry name" value="RNA_pol_Rpb6"/>
    <property type="match status" value="1"/>
</dbReference>
<dbReference type="SMART" id="SM01409">
    <property type="entry name" value="RNA_pol_Rpb6"/>
    <property type="match status" value="1"/>
</dbReference>
<dbReference type="SUPFAM" id="SSF63562">
    <property type="entry name" value="RPB6/omega subunit-like"/>
    <property type="match status" value="1"/>
</dbReference>
<reference key="1">
    <citation type="journal article" date="2006" name="J. Bacteriol.">
        <title>Complete genome sequence of Yersinia pestis strains Antiqua and Nepal516: evidence of gene reduction in an emerging pathogen.</title>
        <authorList>
            <person name="Chain P.S.G."/>
            <person name="Hu P."/>
            <person name="Malfatti S.A."/>
            <person name="Radnedge L."/>
            <person name="Larimer F."/>
            <person name="Vergez L.M."/>
            <person name="Worsham P."/>
            <person name="Chu M.C."/>
            <person name="Andersen G.L."/>
        </authorList>
    </citation>
    <scope>NUCLEOTIDE SEQUENCE [LARGE SCALE GENOMIC DNA]</scope>
    <source>
        <strain>Nepal516</strain>
    </source>
</reference>
<reference key="2">
    <citation type="submission" date="2009-04" db="EMBL/GenBank/DDBJ databases">
        <title>Yersinia pestis Nepal516A whole genome shotgun sequencing project.</title>
        <authorList>
            <person name="Plunkett G. III"/>
            <person name="Anderson B.D."/>
            <person name="Baumler D.J."/>
            <person name="Burland V."/>
            <person name="Cabot E.L."/>
            <person name="Glasner J.D."/>
            <person name="Mau B."/>
            <person name="Neeno-Eckwall E."/>
            <person name="Perna N.T."/>
            <person name="Munk A.C."/>
            <person name="Tapia R."/>
            <person name="Green L.D."/>
            <person name="Rogers Y.C."/>
            <person name="Detter J.C."/>
            <person name="Bruce D.C."/>
            <person name="Brettin T.S."/>
        </authorList>
    </citation>
    <scope>NUCLEOTIDE SEQUENCE [LARGE SCALE GENOMIC DNA]</scope>
    <source>
        <strain>Nepal516</strain>
    </source>
</reference>
<keyword id="KW-0240">DNA-directed RNA polymerase</keyword>
<keyword id="KW-0548">Nucleotidyltransferase</keyword>
<keyword id="KW-0804">Transcription</keyword>
<keyword id="KW-0808">Transferase</keyword>
<sequence>MARVTVQDAVEKIGNRFDLVLVAARRARQIQSGGKDALVPEENDKVTVIALREIEEGLITNQILDVRERQEQQEQQAAEIQAVTAIAEGRR</sequence>
<accession>Q1CCZ2</accession>
<accession>D1Q2H1</accession>
<proteinExistence type="inferred from homology"/>
<organism>
    <name type="scientific">Yersinia pestis bv. Antiqua (strain Nepal516)</name>
    <dbReference type="NCBI Taxonomy" id="377628"/>
    <lineage>
        <taxon>Bacteria</taxon>
        <taxon>Pseudomonadati</taxon>
        <taxon>Pseudomonadota</taxon>
        <taxon>Gammaproteobacteria</taxon>
        <taxon>Enterobacterales</taxon>
        <taxon>Yersiniaceae</taxon>
        <taxon>Yersinia</taxon>
    </lineage>
</organism>